<proteinExistence type="inferred from homology"/>
<keyword id="KW-0028">Amino-acid biosynthesis</keyword>
<keyword id="KW-0100">Branched-chain amino acid biosynthesis</keyword>
<keyword id="KW-0460">Magnesium</keyword>
<keyword id="KW-0479">Metal-binding</keyword>
<keyword id="KW-0521">NADP</keyword>
<keyword id="KW-0560">Oxidoreductase</keyword>
<keyword id="KW-0677">Repeat</keyword>
<organism>
    <name type="scientific">Salmonella enteritidis PT4 (strain P125109)</name>
    <dbReference type="NCBI Taxonomy" id="550537"/>
    <lineage>
        <taxon>Bacteria</taxon>
        <taxon>Pseudomonadati</taxon>
        <taxon>Pseudomonadota</taxon>
        <taxon>Gammaproteobacteria</taxon>
        <taxon>Enterobacterales</taxon>
        <taxon>Enterobacteriaceae</taxon>
        <taxon>Salmonella</taxon>
    </lineage>
</organism>
<dbReference type="EC" id="1.1.1.86" evidence="1"/>
<dbReference type="EMBL" id="AM933172">
    <property type="protein sequence ID" value="CAR35290.1"/>
    <property type="molecule type" value="Genomic_DNA"/>
</dbReference>
<dbReference type="RefSeq" id="WP_000024943.1">
    <property type="nucleotide sequence ID" value="NC_011294.1"/>
</dbReference>
<dbReference type="SMR" id="B5QVG7"/>
<dbReference type="KEGG" id="set:SEN3715"/>
<dbReference type="HOGENOM" id="CLU_551905_0_0_6"/>
<dbReference type="UniPathway" id="UPA00047">
    <property type="reaction ID" value="UER00056"/>
</dbReference>
<dbReference type="UniPathway" id="UPA00049">
    <property type="reaction ID" value="UER00060"/>
</dbReference>
<dbReference type="Proteomes" id="UP000000613">
    <property type="component" value="Chromosome"/>
</dbReference>
<dbReference type="GO" id="GO:0005829">
    <property type="term" value="C:cytosol"/>
    <property type="evidence" value="ECO:0007669"/>
    <property type="project" value="TreeGrafter"/>
</dbReference>
<dbReference type="GO" id="GO:0004455">
    <property type="term" value="F:ketol-acid reductoisomerase activity"/>
    <property type="evidence" value="ECO:0007669"/>
    <property type="project" value="UniProtKB-UniRule"/>
</dbReference>
<dbReference type="GO" id="GO:0000287">
    <property type="term" value="F:magnesium ion binding"/>
    <property type="evidence" value="ECO:0007669"/>
    <property type="project" value="UniProtKB-UniRule"/>
</dbReference>
<dbReference type="GO" id="GO:0009097">
    <property type="term" value="P:isoleucine biosynthetic process"/>
    <property type="evidence" value="ECO:0007669"/>
    <property type="project" value="UniProtKB-UniRule"/>
</dbReference>
<dbReference type="GO" id="GO:0009099">
    <property type="term" value="P:L-valine biosynthetic process"/>
    <property type="evidence" value="ECO:0007669"/>
    <property type="project" value="UniProtKB-UniRule"/>
</dbReference>
<dbReference type="FunFam" id="1.10.1040.10:FF:000007">
    <property type="entry name" value="Ketol-acid reductoisomerase (NADP(+))"/>
    <property type="match status" value="1"/>
</dbReference>
<dbReference type="FunFam" id="3.40.50.720:FF:000043">
    <property type="entry name" value="Ketol-acid reductoisomerase (NADP(+))"/>
    <property type="match status" value="1"/>
</dbReference>
<dbReference type="Gene3D" id="1.10.1040.10">
    <property type="entry name" value="N-(1-d-carboxylethyl)-l-norvaline Dehydrogenase, domain 2"/>
    <property type="match status" value="1"/>
</dbReference>
<dbReference type="Gene3D" id="3.40.50.720">
    <property type="entry name" value="NAD(P)-binding Rossmann-like Domain"/>
    <property type="match status" value="1"/>
</dbReference>
<dbReference type="HAMAP" id="MF_00435">
    <property type="entry name" value="IlvC"/>
    <property type="match status" value="1"/>
</dbReference>
<dbReference type="InterPro" id="IPR008927">
    <property type="entry name" value="6-PGluconate_DH-like_C_sf"/>
</dbReference>
<dbReference type="InterPro" id="IPR013328">
    <property type="entry name" value="6PGD_dom2"/>
</dbReference>
<dbReference type="InterPro" id="IPR013023">
    <property type="entry name" value="KARI"/>
</dbReference>
<dbReference type="InterPro" id="IPR000506">
    <property type="entry name" value="KARI_C"/>
</dbReference>
<dbReference type="InterPro" id="IPR013116">
    <property type="entry name" value="KARI_N"/>
</dbReference>
<dbReference type="InterPro" id="IPR036291">
    <property type="entry name" value="NAD(P)-bd_dom_sf"/>
</dbReference>
<dbReference type="NCBIfam" id="TIGR00465">
    <property type="entry name" value="ilvC"/>
    <property type="match status" value="1"/>
</dbReference>
<dbReference type="NCBIfam" id="NF003557">
    <property type="entry name" value="PRK05225.1"/>
    <property type="match status" value="1"/>
</dbReference>
<dbReference type="PANTHER" id="PTHR21371">
    <property type="entry name" value="KETOL-ACID REDUCTOISOMERASE, MITOCHONDRIAL"/>
    <property type="match status" value="1"/>
</dbReference>
<dbReference type="PANTHER" id="PTHR21371:SF1">
    <property type="entry name" value="KETOL-ACID REDUCTOISOMERASE, MITOCHONDRIAL"/>
    <property type="match status" value="1"/>
</dbReference>
<dbReference type="Pfam" id="PF01450">
    <property type="entry name" value="KARI_C"/>
    <property type="match status" value="2"/>
</dbReference>
<dbReference type="Pfam" id="PF07991">
    <property type="entry name" value="KARI_N"/>
    <property type="match status" value="1"/>
</dbReference>
<dbReference type="SUPFAM" id="SSF48179">
    <property type="entry name" value="6-phosphogluconate dehydrogenase C-terminal domain-like"/>
    <property type="match status" value="2"/>
</dbReference>
<dbReference type="SUPFAM" id="SSF51735">
    <property type="entry name" value="NAD(P)-binding Rossmann-fold domains"/>
    <property type="match status" value="1"/>
</dbReference>
<dbReference type="PROSITE" id="PS51851">
    <property type="entry name" value="KARI_C"/>
    <property type="match status" value="2"/>
</dbReference>
<dbReference type="PROSITE" id="PS51850">
    <property type="entry name" value="KARI_N"/>
    <property type="match status" value="1"/>
</dbReference>
<protein>
    <recommendedName>
        <fullName evidence="1">Ketol-acid reductoisomerase (NADP(+))</fullName>
        <shortName evidence="1">KARI</shortName>
        <ecNumber evidence="1">1.1.1.86</ecNumber>
    </recommendedName>
    <alternativeName>
        <fullName evidence="1">Acetohydroxy-acid isomeroreductase</fullName>
        <shortName evidence="1">AHIR</shortName>
    </alternativeName>
    <alternativeName>
        <fullName evidence="1">Alpha-keto-beta-hydroxylacyl reductoisomerase</fullName>
    </alternativeName>
    <alternativeName>
        <fullName evidence="1">Ketol-acid reductoisomerase type 2</fullName>
    </alternativeName>
    <alternativeName>
        <fullName evidence="1">Ketol-acid reductoisomerase type II</fullName>
    </alternativeName>
</protein>
<accession>B5QVG7</accession>
<comment type="function">
    <text evidence="1">Involved in the biosynthesis of branched-chain amino acids (BCAA). Catalyzes an alkyl-migration followed by a ketol-acid reduction of (S)-2-acetolactate (S2AL) to yield (R)-2,3-dihydroxy-isovalerate. In the isomerase reaction, S2AL is rearranged via a Mg-dependent methyl migration to produce 3-hydroxy-3-methyl-2-ketobutyrate (HMKB). In the reductase reaction, this 2-ketoacid undergoes a metal-dependent reduction by NADPH to yield (R)-2,3-dihydroxy-isovalerate.</text>
</comment>
<comment type="catalytic activity">
    <reaction evidence="1">
        <text>(2R)-2,3-dihydroxy-3-methylbutanoate + NADP(+) = (2S)-2-acetolactate + NADPH + H(+)</text>
        <dbReference type="Rhea" id="RHEA:22068"/>
        <dbReference type="ChEBI" id="CHEBI:15378"/>
        <dbReference type="ChEBI" id="CHEBI:49072"/>
        <dbReference type="ChEBI" id="CHEBI:57783"/>
        <dbReference type="ChEBI" id="CHEBI:58349"/>
        <dbReference type="ChEBI" id="CHEBI:58476"/>
        <dbReference type="EC" id="1.1.1.86"/>
    </reaction>
</comment>
<comment type="catalytic activity">
    <reaction evidence="1">
        <text>(2R,3R)-2,3-dihydroxy-3-methylpentanoate + NADP(+) = (S)-2-ethyl-2-hydroxy-3-oxobutanoate + NADPH + H(+)</text>
        <dbReference type="Rhea" id="RHEA:13493"/>
        <dbReference type="ChEBI" id="CHEBI:15378"/>
        <dbReference type="ChEBI" id="CHEBI:49256"/>
        <dbReference type="ChEBI" id="CHEBI:49258"/>
        <dbReference type="ChEBI" id="CHEBI:57783"/>
        <dbReference type="ChEBI" id="CHEBI:58349"/>
        <dbReference type="EC" id="1.1.1.86"/>
    </reaction>
</comment>
<comment type="cofactor">
    <cofactor evidence="1">
        <name>Mg(2+)</name>
        <dbReference type="ChEBI" id="CHEBI:18420"/>
    </cofactor>
    <text evidence="1">Binds 2 magnesium ions per subunit.</text>
</comment>
<comment type="pathway">
    <text evidence="1">Amino-acid biosynthesis; L-isoleucine biosynthesis; L-isoleucine from 2-oxobutanoate: step 2/4.</text>
</comment>
<comment type="pathway">
    <text evidence="1">Amino-acid biosynthesis; L-valine biosynthesis; L-valine from pyruvate: step 2/4.</text>
</comment>
<comment type="similarity">
    <text evidence="1">Belongs to the ketol-acid reductoisomerase family.</text>
</comment>
<name>ILVC_SALEP</name>
<sequence length="491" mass="53926">MANYFNTLNLRQQLAQLGKCRFMGRDEFADGASYLQGKKVVIVGCGAQGLNQGLNMRDSGLDISYALRKEAIAEKRASWRKATENGFKVGTYEELIPQADLVVNLTPDKQHSDVVRSVQPLMKDGAALGYSHGFNIVEVGEQIRKDITVVMVAPKCPGTEVREEYKRGFGVPTLIAVHPENDPKGEGMAIAKAWAAATGGHRAGVLESSFVAEVKSDLMGEQTILCGMLQAGSLLCFDKLVAEGTDPAYAEKLIQFGWETITEALKQGGITLMMDRLSNPAKLRAYALSEQLKEIMAPLFQKHMDDIISGEFSSGMMADWANDDKKLLTWREETGKTAFETAPQFEGKIGEQEYFDKGVLMIAMVKAGVELAFETMVDSGIIEESAYYESLHELPLIANTIARKRLYEMNVVISDTAEYGNYLFSYACVPLLKPFMAELQPGDLGSAIPEGAVDNAQLRDVNDAIRSHAIEQVGKKLRGYMTDMKRIAVAG</sequence>
<reference key="1">
    <citation type="journal article" date="2008" name="Genome Res.">
        <title>Comparative genome analysis of Salmonella enteritidis PT4 and Salmonella gallinarum 287/91 provides insights into evolutionary and host adaptation pathways.</title>
        <authorList>
            <person name="Thomson N.R."/>
            <person name="Clayton D.J."/>
            <person name="Windhorst D."/>
            <person name="Vernikos G."/>
            <person name="Davidson S."/>
            <person name="Churcher C."/>
            <person name="Quail M.A."/>
            <person name="Stevens M."/>
            <person name="Jones M.A."/>
            <person name="Watson M."/>
            <person name="Barron A."/>
            <person name="Layton A."/>
            <person name="Pickard D."/>
            <person name="Kingsley R.A."/>
            <person name="Bignell A."/>
            <person name="Clark L."/>
            <person name="Harris B."/>
            <person name="Ormond D."/>
            <person name="Abdellah Z."/>
            <person name="Brooks K."/>
            <person name="Cherevach I."/>
            <person name="Chillingworth T."/>
            <person name="Woodward J."/>
            <person name="Norberczak H."/>
            <person name="Lord A."/>
            <person name="Arrowsmith C."/>
            <person name="Jagels K."/>
            <person name="Moule S."/>
            <person name="Mungall K."/>
            <person name="Saunders M."/>
            <person name="Whitehead S."/>
            <person name="Chabalgoity J.A."/>
            <person name="Maskell D."/>
            <person name="Humphreys T."/>
            <person name="Roberts M."/>
            <person name="Barrow P.A."/>
            <person name="Dougan G."/>
            <person name="Parkhill J."/>
        </authorList>
    </citation>
    <scope>NUCLEOTIDE SEQUENCE [LARGE SCALE GENOMIC DNA]</scope>
    <source>
        <strain>P125109</strain>
    </source>
</reference>
<evidence type="ECO:0000255" key="1">
    <source>
        <dbReference type="HAMAP-Rule" id="MF_00435"/>
    </source>
</evidence>
<evidence type="ECO:0000255" key="2">
    <source>
        <dbReference type="PROSITE-ProRule" id="PRU01197"/>
    </source>
</evidence>
<evidence type="ECO:0000255" key="3">
    <source>
        <dbReference type="PROSITE-ProRule" id="PRU01198"/>
    </source>
</evidence>
<gene>
    <name evidence="1" type="primary">ilvC</name>
    <name type="ordered locus">SEN3715</name>
</gene>
<feature type="chain" id="PRO_1000190986" description="Ketol-acid reductoisomerase (NADP(+))">
    <location>
        <begin position="1"/>
        <end position="491"/>
    </location>
</feature>
<feature type="domain" description="KARI N-terminal Rossmann" evidence="2">
    <location>
        <begin position="15"/>
        <end position="208"/>
    </location>
</feature>
<feature type="domain" description="KARI C-terminal knotted 1" evidence="3">
    <location>
        <begin position="209"/>
        <end position="344"/>
    </location>
</feature>
<feature type="domain" description="KARI C-terminal knotted 2" evidence="3">
    <location>
        <begin position="345"/>
        <end position="484"/>
    </location>
</feature>
<feature type="active site" evidence="1">
    <location>
        <position position="132"/>
    </location>
</feature>
<feature type="binding site" evidence="1">
    <location>
        <begin position="45"/>
        <end position="48"/>
    </location>
    <ligand>
        <name>NADP(+)</name>
        <dbReference type="ChEBI" id="CHEBI:58349"/>
    </ligand>
</feature>
<feature type="binding site" evidence="1">
    <location>
        <position position="68"/>
    </location>
    <ligand>
        <name>NADP(+)</name>
        <dbReference type="ChEBI" id="CHEBI:58349"/>
    </ligand>
</feature>
<feature type="binding site" evidence="1">
    <location>
        <position position="76"/>
    </location>
    <ligand>
        <name>NADP(+)</name>
        <dbReference type="ChEBI" id="CHEBI:58349"/>
    </ligand>
</feature>
<feature type="binding site" evidence="1">
    <location>
        <position position="78"/>
    </location>
    <ligand>
        <name>NADP(+)</name>
        <dbReference type="ChEBI" id="CHEBI:58349"/>
    </ligand>
</feature>
<feature type="binding site" evidence="1">
    <location>
        <begin position="108"/>
        <end position="110"/>
    </location>
    <ligand>
        <name>NADP(+)</name>
        <dbReference type="ChEBI" id="CHEBI:58349"/>
    </ligand>
</feature>
<feature type="binding site" evidence="1">
    <location>
        <position position="158"/>
    </location>
    <ligand>
        <name>NADP(+)</name>
        <dbReference type="ChEBI" id="CHEBI:58349"/>
    </ligand>
</feature>
<feature type="binding site" evidence="1">
    <location>
        <position position="217"/>
    </location>
    <ligand>
        <name>Mg(2+)</name>
        <dbReference type="ChEBI" id="CHEBI:18420"/>
        <label>1</label>
    </ligand>
</feature>
<feature type="binding site" evidence="1">
    <location>
        <position position="217"/>
    </location>
    <ligand>
        <name>Mg(2+)</name>
        <dbReference type="ChEBI" id="CHEBI:18420"/>
        <label>2</label>
    </ligand>
</feature>
<feature type="binding site" evidence="1">
    <location>
        <position position="221"/>
    </location>
    <ligand>
        <name>Mg(2+)</name>
        <dbReference type="ChEBI" id="CHEBI:18420"/>
        <label>1</label>
    </ligand>
</feature>
<feature type="binding site" evidence="1">
    <location>
        <position position="389"/>
    </location>
    <ligand>
        <name>Mg(2+)</name>
        <dbReference type="ChEBI" id="CHEBI:18420"/>
        <label>2</label>
    </ligand>
</feature>
<feature type="binding site" evidence="1">
    <location>
        <position position="393"/>
    </location>
    <ligand>
        <name>Mg(2+)</name>
        <dbReference type="ChEBI" id="CHEBI:18420"/>
        <label>2</label>
    </ligand>
</feature>
<feature type="binding site" evidence="1">
    <location>
        <position position="414"/>
    </location>
    <ligand>
        <name>substrate</name>
    </ligand>
</feature>